<comment type="function">
    <text evidence="1">Strong activator of the late viral genes promoters. Enhances the expression of the capsid protein and nuclear shuttle protein. Acts as a suppressor of RNA-mediated gene silencing, also known as post-transcriptional gene silencing (PTGS), a mechanism of plant viral defense that limits the accumulation of viral RNAs. Suppresses the host RNA silencing by inhibiting adenosine kinase 2 (ADK2), a kinase involved in a general methylation pathway. Also suppresses the host basal defense by interacting with and inhibiting SNF1 kinase, a key regulator of cell metabolism implicated in innate antiviral defense. Determines pathogenicity (By similarity).</text>
</comment>
<comment type="subunit">
    <text evidence="1">Monomer. Homodimer. Homooligomer. Self-interaction correlates with nuclear localization and efficient activation of transcription. Monomers suppress local silencing by interacting with and inactivating host adenosine kinase 2 (ADK2) in the cytoplasm. Interacts with and inhibits host SNF1 kinase. Binds to ssDNA (By similarity).</text>
</comment>
<comment type="subcellular location">
    <subcellularLocation>
        <location evidence="1">Host nucleus</location>
    </subcellularLocation>
    <subcellularLocation>
        <location evidence="1">Host cytoplasm</location>
    </subcellularLocation>
    <text evidence="1">The phosphorylated form appears to accumulate almost exclusively in the nucleus, whereas the non-phosphorylated form is found in both nucleus and cytoplasm.</text>
</comment>
<comment type="domain">
    <text evidence="1">The zinc finger and the transactivation region are involved in PTGS suppression.</text>
</comment>
<comment type="PTM">
    <text evidence="1">Phosphorylated.</text>
</comment>
<comment type="similarity">
    <text evidence="3">Belongs to the geminiviridae transcriptional activator protein family.</text>
</comment>
<proteinExistence type="inferred from homology"/>
<name>TRAP_PHUV</name>
<keyword id="KW-0010">Activator</keyword>
<keyword id="KW-0238">DNA-binding</keyword>
<keyword id="KW-1035">Host cytoplasm</keyword>
<keyword id="KW-1048">Host nucleus</keyword>
<keyword id="KW-0945">Host-virus interaction</keyword>
<keyword id="KW-1090">Inhibition of host innate immune response by virus</keyword>
<keyword id="KW-0479">Metal-binding</keyword>
<keyword id="KW-0597">Phosphoprotein</keyword>
<keyword id="KW-1185">Reference proteome</keyword>
<keyword id="KW-0941">Suppressor of RNA silencing</keyword>
<keyword id="KW-0899">Viral immunoevasion</keyword>
<keyword id="KW-0862">Zinc</keyword>
<keyword id="KW-0863">Zinc-finger</keyword>
<reference key="1">
    <citation type="journal article" date="1993" name="J. Gen. Virol.">
        <title>Complete nucleotide sequence of pepper huasteco virus: analysis and comparison with bipartite geminiviruses.</title>
        <authorList>
            <person name="Torres-Pacheco I."/>
            <person name="Garzon-Tiznado J.A."/>
            <person name="Herrera-Estrella L."/>
            <person name="Rivera-Bustamante R.F."/>
        </authorList>
    </citation>
    <scope>NUCLEOTIDE SEQUENCE [GENOMIC DNA]</scope>
</reference>
<organism>
    <name type="scientific">Pepper huasteco yellow vein virus</name>
    <name type="common">PHYVV</name>
    <name type="synonym">Pepper huasteco virus</name>
    <dbReference type="NCBI Taxonomy" id="223303"/>
    <lineage>
        <taxon>Viruses</taxon>
        <taxon>Monodnaviria</taxon>
        <taxon>Shotokuvirae</taxon>
        <taxon>Cressdnaviricota</taxon>
        <taxon>Repensiviricetes</taxon>
        <taxon>Geplafuvirales</taxon>
        <taxon>Geminiviridae</taxon>
        <taxon>Begomovirus</taxon>
    </lineage>
</organism>
<evidence type="ECO:0000250" key="1"/>
<evidence type="ECO:0000256" key="2">
    <source>
        <dbReference type="SAM" id="MobiDB-lite"/>
    </source>
</evidence>
<evidence type="ECO:0000305" key="3"/>
<organismHost>
    <name type="scientific">Capsicum annuum</name>
    <name type="common">Capsicum pepper</name>
    <dbReference type="NCBI Taxonomy" id="4072"/>
</organismHost>
<protein>
    <recommendedName>
        <fullName>Transcriptional activator protein</fullName>
        <shortName>TrAP</shortName>
    </recommendedName>
    <alternativeName>
        <fullName>Protein AC2</fullName>
    </alternativeName>
    <alternativeName>
        <fullName>Protein AL2</fullName>
    </alternativeName>
</protein>
<sequence>MTGSKKTPSTSPSKKLSSPPEVKLRHRFAKRQIRRRRIDLACGCSIYIHINCVNNGFTHRGTHHCSSSSEWRFYLGASKSPIFQNTASGDANVHTQPGISHSSQSKPQHEDSVGSPQSLLQLPSLDDVDDDFWADLLK</sequence>
<accession>Q06924</accession>
<gene>
    <name type="ORF">AC2</name>
    <name type="ORF">AL2</name>
</gene>
<feature type="chain" id="PRO_0000222227" description="Transcriptional activator protein">
    <location>
        <begin position="1"/>
        <end position="138"/>
    </location>
</feature>
<feature type="zinc finger region" evidence="1">
    <location>
        <begin position="42"/>
        <end position="59"/>
    </location>
</feature>
<feature type="region of interest" description="Disordered" evidence="2">
    <location>
        <begin position="1"/>
        <end position="23"/>
    </location>
</feature>
<feature type="region of interest" description="Disordered" evidence="2">
    <location>
        <begin position="85"/>
        <end position="123"/>
    </location>
</feature>
<feature type="region of interest" description="Transactivation" evidence="1">
    <location>
        <begin position="124"/>
        <end position="138"/>
    </location>
</feature>
<feature type="short sequence motif" description="Nuclear localization signal" evidence="1">
    <location>
        <begin position="23"/>
        <end position="37"/>
    </location>
</feature>
<feature type="compositionally biased region" description="Low complexity" evidence="2">
    <location>
        <begin position="1"/>
        <end position="20"/>
    </location>
</feature>
<feature type="compositionally biased region" description="Polar residues" evidence="2">
    <location>
        <begin position="85"/>
        <end position="106"/>
    </location>
</feature>
<feature type="compositionally biased region" description="Low complexity" evidence="2">
    <location>
        <begin position="113"/>
        <end position="123"/>
    </location>
</feature>
<dbReference type="EMBL" id="X70418">
    <property type="protein sequence ID" value="CAA49857.1"/>
    <property type="molecule type" value="Genomic_DNA"/>
</dbReference>
<dbReference type="PIR" id="JQ2301">
    <property type="entry name" value="JQ2301"/>
</dbReference>
<dbReference type="PIR" id="S31876">
    <property type="entry name" value="S31876"/>
</dbReference>
<dbReference type="RefSeq" id="NP_040323.1">
    <property type="nucleotide sequence ID" value="NC_001359.1"/>
</dbReference>
<dbReference type="GeneID" id="988145"/>
<dbReference type="KEGG" id="vg:988145"/>
<dbReference type="OrthoDB" id="11041at10239"/>
<dbReference type="Proteomes" id="UP000002321">
    <property type="component" value="Genome"/>
</dbReference>
<dbReference type="GO" id="GO:0030430">
    <property type="term" value="C:host cell cytoplasm"/>
    <property type="evidence" value="ECO:0007669"/>
    <property type="project" value="UniProtKB-SubCell"/>
</dbReference>
<dbReference type="GO" id="GO:0042025">
    <property type="term" value="C:host cell nucleus"/>
    <property type="evidence" value="ECO:0007669"/>
    <property type="project" value="UniProtKB-SubCell"/>
</dbReference>
<dbReference type="GO" id="GO:0019028">
    <property type="term" value="C:viral capsid"/>
    <property type="evidence" value="ECO:0007669"/>
    <property type="project" value="InterPro"/>
</dbReference>
<dbReference type="GO" id="GO:0003677">
    <property type="term" value="F:DNA binding"/>
    <property type="evidence" value="ECO:0007669"/>
    <property type="project" value="UniProtKB-KW"/>
</dbReference>
<dbReference type="GO" id="GO:0005198">
    <property type="term" value="F:structural molecule activity"/>
    <property type="evidence" value="ECO:0007669"/>
    <property type="project" value="InterPro"/>
</dbReference>
<dbReference type="GO" id="GO:0008270">
    <property type="term" value="F:zinc ion binding"/>
    <property type="evidence" value="ECO:0007669"/>
    <property type="project" value="UniProtKB-KW"/>
</dbReference>
<dbReference type="GO" id="GO:0052170">
    <property type="term" value="P:symbiont-mediated suppression of host innate immune response"/>
    <property type="evidence" value="ECO:0007669"/>
    <property type="project" value="UniProtKB-KW"/>
</dbReference>
<dbReference type="InterPro" id="IPR000942">
    <property type="entry name" value="Gemini_AL2"/>
</dbReference>
<dbReference type="Pfam" id="PF01440">
    <property type="entry name" value="Gemini_AL2"/>
    <property type="match status" value="1"/>
</dbReference>
<dbReference type="PRINTS" id="PR00230">
    <property type="entry name" value="GEMCOATAL2"/>
</dbReference>